<dbReference type="EC" id="3.4.24.-"/>
<dbReference type="EMBL" id="AAFI02000197">
    <property type="protein sequence ID" value="EAL60960.1"/>
    <property type="molecule type" value="Genomic_DNA"/>
</dbReference>
<dbReference type="RefSeq" id="XP_629366.1">
    <property type="nucleotide sequence ID" value="XM_629364.1"/>
</dbReference>
<dbReference type="FunCoup" id="Q54CQ0">
    <property type="interactions" value="4"/>
</dbReference>
<dbReference type="PaxDb" id="44689-DDB0252868"/>
<dbReference type="EnsemblProtists" id="EAL60960">
    <property type="protein sequence ID" value="EAL60960"/>
    <property type="gene ID" value="DDB_G0292822"/>
</dbReference>
<dbReference type="GeneID" id="8628883"/>
<dbReference type="KEGG" id="ddi:DDB_G0292822"/>
<dbReference type="dictyBase" id="DDB_G0292822"/>
<dbReference type="VEuPathDB" id="AmoebaDB:DDB_G0292822"/>
<dbReference type="eggNOG" id="ENOG502SN3T">
    <property type="taxonomic scope" value="Eukaryota"/>
</dbReference>
<dbReference type="HOGENOM" id="CLU_451780_0_0_1"/>
<dbReference type="InParanoid" id="Q54CQ0"/>
<dbReference type="OMA" id="HAGEAYD"/>
<dbReference type="PhylomeDB" id="Q54CQ0"/>
<dbReference type="PRO" id="PR:Q54CQ0"/>
<dbReference type="Proteomes" id="UP000002195">
    <property type="component" value="Chromosome 6"/>
</dbReference>
<dbReference type="GO" id="GO:0005576">
    <property type="term" value="C:extracellular region"/>
    <property type="evidence" value="ECO:0007669"/>
    <property type="project" value="UniProtKB-SubCell"/>
</dbReference>
<dbReference type="GO" id="GO:0046872">
    <property type="term" value="F:metal ion binding"/>
    <property type="evidence" value="ECO:0007669"/>
    <property type="project" value="UniProtKB-KW"/>
</dbReference>
<dbReference type="GO" id="GO:0004222">
    <property type="term" value="F:metalloendopeptidase activity"/>
    <property type="evidence" value="ECO:0007669"/>
    <property type="project" value="InterPro"/>
</dbReference>
<dbReference type="GO" id="GO:0006508">
    <property type="term" value="P:proteolysis"/>
    <property type="evidence" value="ECO:0007669"/>
    <property type="project" value="UniProtKB-KW"/>
</dbReference>
<dbReference type="InterPro" id="IPR051256">
    <property type="entry name" value="Dictomallein"/>
</dbReference>
<dbReference type="InterPro" id="IPR019503">
    <property type="entry name" value="Peptidase_M66_dom"/>
</dbReference>
<dbReference type="PANTHER" id="PTHR39540">
    <property type="match status" value="1"/>
</dbReference>
<dbReference type="PANTHER" id="PTHR39540:SF1">
    <property type="entry name" value="DICTOMALLEIN-1-RELATED"/>
    <property type="match status" value="1"/>
</dbReference>
<dbReference type="Pfam" id="PF10462">
    <property type="entry name" value="Peptidase_M66"/>
    <property type="match status" value="1"/>
</dbReference>
<dbReference type="SUPFAM" id="SSF55486">
    <property type="entry name" value="Metalloproteases ('zincins'), catalytic domain"/>
    <property type="match status" value="1"/>
</dbReference>
<dbReference type="PROSITE" id="PS51694">
    <property type="entry name" value="PEPTIDASE_M66"/>
    <property type="match status" value="1"/>
</dbReference>
<comment type="cofactor">
    <cofactor evidence="3">
        <name>Zn(2+)</name>
        <dbReference type="ChEBI" id="CHEBI:29105"/>
    </cofactor>
    <text evidence="3">Binds 1 zinc ion per subunit.</text>
</comment>
<comment type="subcellular location">
    <subcellularLocation>
        <location evidence="3">Secreted</location>
    </subcellularLocation>
</comment>
<comment type="similarity">
    <text evidence="3">Belongs to the dictomallein family.</text>
</comment>
<organism>
    <name type="scientific">Dictyostelium discoideum</name>
    <name type="common">Social amoeba</name>
    <dbReference type="NCBI Taxonomy" id="44689"/>
    <lineage>
        <taxon>Eukaryota</taxon>
        <taxon>Amoebozoa</taxon>
        <taxon>Evosea</taxon>
        <taxon>Eumycetozoa</taxon>
        <taxon>Dictyostelia</taxon>
        <taxon>Dictyosteliales</taxon>
        <taxon>Dictyosteliaceae</taxon>
        <taxon>Dictyostelium</taxon>
    </lineage>
</organism>
<accession>Q54CQ0</accession>
<name>DTML2_DICDI</name>
<reference key="1">
    <citation type="journal article" date="2005" name="Nature">
        <title>The genome of the social amoeba Dictyostelium discoideum.</title>
        <authorList>
            <person name="Eichinger L."/>
            <person name="Pachebat J.A."/>
            <person name="Gloeckner G."/>
            <person name="Rajandream M.A."/>
            <person name="Sucgang R."/>
            <person name="Berriman M."/>
            <person name="Song J."/>
            <person name="Olsen R."/>
            <person name="Szafranski K."/>
            <person name="Xu Q."/>
            <person name="Tunggal B."/>
            <person name="Kummerfeld S."/>
            <person name="Madera M."/>
            <person name="Konfortov B.A."/>
            <person name="Rivero F."/>
            <person name="Bankier A.T."/>
            <person name="Lehmann R."/>
            <person name="Hamlin N."/>
            <person name="Davies R."/>
            <person name="Gaudet P."/>
            <person name="Fey P."/>
            <person name="Pilcher K."/>
            <person name="Chen G."/>
            <person name="Saunders D."/>
            <person name="Sodergren E.J."/>
            <person name="Davis P."/>
            <person name="Kerhornou A."/>
            <person name="Nie X."/>
            <person name="Hall N."/>
            <person name="Anjard C."/>
            <person name="Hemphill L."/>
            <person name="Bason N."/>
            <person name="Farbrother P."/>
            <person name="Desany B."/>
            <person name="Just E."/>
            <person name="Morio T."/>
            <person name="Rost R."/>
            <person name="Churcher C.M."/>
            <person name="Cooper J."/>
            <person name="Haydock S."/>
            <person name="van Driessche N."/>
            <person name="Cronin A."/>
            <person name="Goodhead I."/>
            <person name="Muzny D.M."/>
            <person name="Mourier T."/>
            <person name="Pain A."/>
            <person name="Lu M."/>
            <person name="Harper D."/>
            <person name="Lindsay R."/>
            <person name="Hauser H."/>
            <person name="James K.D."/>
            <person name="Quiles M."/>
            <person name="Madan Babu M."/>
            <person name="Saito T."/>
            <person name="Buchrieser C."/>
            <person name="Wardroper A."/>
            <person name="Felder M."/>
            <person name="Thangavelu M."/>
            <person name="Johnson D."/>
            <person name="Knights A."/>
            <person name="Loulseged H."/>
            <person name="Mungall K.L."/>
            <person name="Oliver K."/>
            <person name="Price C."/>
            <person name="Quail M.A."/>
            <person name="Urushihara H."/>
            <person name="Hernandez J."/>
            <person name="Rabbinowitsch E."/>
            <person name="Steffen D."/>
            <person name="Sanders M."/>
            <person name="Ma J."/>
            <person name="Kohara Y."/>
            <person name="Sharp S."/>
            <person name="Simmonds M.N."/>
            <person name="Spiegler S."/>
            <person name="Tivey A."/>
            <person name="Sugano S."/>
            <person name="White B."/>
            <person name="Walker D."/>
            <person name="Woodward J.R."/>
            <person name="Winckler T."/>
            <person name="Tanaka Y."/>
            <person name="Shaulsky G."/>
            <person name="Schleicher M."/>
            <person name="Weinstock G.M."/>
            <person name="Rosenthal A."/>
            <person name="Cox E.C."/>
            <person name="Chisholm R.L."/>
            <person name="Gibbs R.A."/>
            <person name="Loomis W.F."/>
            <person name="Platzer M."/>
            <person name="Kay R.R."/>
            <person name="Williams J.G."/>
            <person name="Dear P.H."/>
            <person name="Noegel A.A."/>
            <person name="Barrell B.G."/>
            <person name="Kuspa A."/>
        </authorList>
    </citation>
    <scope>NUCLEOTIDE SEQUENCE [LARGE SCALE GENOMIC DNA]</scope>
    <source>
        <strain>AX4</strain>
    </source>
</reference>
<proteinExistence type="inferred from homology"/>
<sequence length="599" mass="67712">MKLILIYLILVFNLFNFINCQNILKVSNVRFAQTHVIPIEGKSWNIQGSTKHMSIVGKRRALLLASFQDQNLSYFATIWYDGGKVGMIQLNDPSQLPLTEDNGEKYSKVHHSGMIPKEWVRVGMKIQFSSFGGINGTEVSDILSPDVGQDYTLKMWILPFYLFGANDTNTQPFSKTKGIDSGISKELIEKWSCSDLQADNHPIQKIDWPYFVMEPRSGNPAMVITNSDQKKDGYAIMNGVLSILWLLRGMFGESSSSIQIYSPLLHLDAKGRYADTYGGLGGSSAGTGNHRFTGIFIHEQGHAMGLPHAGEAYDNKRKYPYKQGSLSGSEWGFDANHNEFLGTFIPPTAELYKTCKKNSIIDSKGRCVKQSVMQSGAGDQSSKYRYSMFADFEMTTIQNYFKNSIYYDETNGKYKKWNDTSKSYYAYKPITKEKGFEGVDENTPIERNVDIYSIIFTYSTVEKPKVGKISQIYPLLKSKGNLIRQFDPTNKKEMDSVNPKLNGEFKWYCNSSGCDYTIRVTFYDSSLKHVLLQQGKRKYKLPTGSFRDNINDPKSSDSFMLGGVNIKANKKIKKVELLETPFAWNGIPKNPTVLVSKSF</sequence>
<gene>
    <name type="primary">dtmlB</name>
    <name type="ORF">DDB_G0292822</name>
</gene>
<evidence type="ECO:0000250" key="1"/>
<evidence type="ECO:0000255" key="2"/>
<evidence type="ECO:0000305" key="3"/>
<feature type="signal peptide" evidence="2">
    <location>
        <begin position="1"/>
        <end position="20"/>
    </location>
</feature>
<feature type="chain" id="PRO_0000322647" description="Dictomallein-2">
    <location>
        <begin position="21"/>
        <end position="599"/>
    </location>
</feature>
<feature type="domain" description="Peptidase M66">
    <location>
        <begin position="145"/>
        <end position="407"/>
    </location>
</feature>
<feature type="active site" evidence="1">
    <location>
        <position position="299"/>
    </location>
</feature>
<feature type="binding site" evidence="1">
    <location>
        <position position="298"/>
    </location>
    <ligand>
        <name>Zn(2+)</name>
        <dbReference type="ChEBI" id="CHEBI:29105"/>
        <note>catalytic</note>
    </ligand>
</feature>
<feature type="binding site" evidence="1">
    <location>
        <position position="302"/>
    </location>
    <ligand>
        <name>Zn(2+)</name>
        <dbReference type="ChEBI" id="CHEBI:29105"/>
        <note>catalytic</note>
    </ligand>
</feature>
<feature type="binding site" evidence="1">
    <location>
        <position position="308"/>
    </location>
    <ligand>
        <name>Zn(2+)</name>
        <dbReference type="ChEBI" id="CHEBI:29105"/>
        <note>catalytic</note>
    </ligand>
</feature>
<protein>
    <recommendedName>
        <fullName>Dictomallein-2</fullName>
        <ecNumber>3.4.24.-</ecNumber>
    </recommendedName>
</protein>
<keyword id="KW-0378">Hydrolase</keyword>
<keyword id="KW-0479">Metal-binding</keyword>
<keyword id="KW-0482">Metalloprotease</keyword>
<keyword id="KW-0645">Protease</keyword>
<keyword id="KW-1185">Reference proteome</keyword>
<keyword id="KW-0964">Secreted</keyword>
<keyword id="KW-0732">Signal</keyword>
<keyword id="KW-0862">Zinc</keyword>